<dbReference type="EC" id="7.2.1.1" evidence="1"/>
<dbReference type="EMBL" id="AE016795">
    <property type="protein sequence ID" value="AAO10232.1"/>
    <property type="molecule type" value="Genomic_DNA"/>
</dbReference>
<dbReference type="RefSeq" id="WP_011079732.1">
    <property type="nucleotide sequence ID" value="NC_004459.3"/>
</dbReference>
<dbReference type="SMR" id="Q8DBJ1"/>
<dbReference type="GeneID" id="93896059"/>
<dbReference type="KEGG" id="vvu:VV1_1826"/>
<dbReference type="HOGENOM" id="CLU_003827_7_2_6"/>
<dbReference type="Proteomes" id="UP000002275">
    <property type="component" value="Chromosome 1"/>
</dbReference>
<dbReference type="GO" id="GO:0005886">
    <property type="term" value="C:plasma membrane"/>
    <property type="evidence" value="ECO:0007669"/>
    <property type="project" value="UniProtKB-SubCell"/>
</dbReference>
<dbReference type="GO" id="GO:0051537">
    <property type="term" value="F:2 iron, 2 sulfur cluster binding"/>
    <property type="evidence" value="ECO:0007669"/>
    <property type="project" value="UniProtKB-KW"/>
</dbReference>
<dbReference type="GO" id="GO:0009055">
    <property type="term" value="F:electron transfer activity"/>
    <property type="evidence" value="ECO:0007669"/>
    <property type="project" value="UniProtKB-UniRule"/>
</dbReference>
<dbReference type="GO" id="GO:0046872">
    <property type="term" value="F:metal ion binding"/>
    <property type="evidence" value="ECO:0007669"/>
    <property type="project" value="UniProtKB-KW"/>
</dbReference>
<dbReference type="GO" id="GO:0016655">
    <property type="term" value="F:oxidoreductase activity, acting on NAD(P)H, quinone or similar compound as acceptor"/>
    <property type="evidence" value="ECO:0007669"/>
    <property type="project" value="InterPro"/>
</dbReference>
<dbReference type="GO" id="GO:0006814">
    <property type="term" value="P:sodium ion transport"/>
    <property type="evidence" value="ECO:0007669"/>
    <property type="project" value="UniProtKB-UniRule"/>
</dbReference>
<dbReference type="CDD" id="cd00207">
    <property type="entry name" value="fer2"/>
    <property type="match status" value="1"/>
</dbReference>
<dbReference type="CDD" id="cd06188">
    <property type="entry name" value="NADH_quinone_reductase"/>
    <property type="match status" value="1"/>
</dbReference>
<dbReference type="FunFam" id="2.40.30.10:FF:000064">
    <property type="entry name" value="Na(+)-translocating NADH-quinone reductase subunit F"/>
    <property type="match status" value="1"/>
</dbReference>
<dbReference type="FunFam" id="3.10.20.30:FF:000024">
    <property type="entry name" value="Na(+)-translocating NADH-quinone reductase subunit F"/>
    <property type="match status" value="1"/>
</dbReference>
<dbReference type="FunFam" id="3.40.50.80:FF:000014">
    <property type="entry name" value="Na(+)-translocating NADH-quinone reductase subunit F"/>
    <property type="match status" value="1"/>
</dbReference>
<dbReference type="Gene3D" id="3.10.20.30">
    <property type="match status" value="1"/>
</dbReference>
<dbReference type="Gene3D" id="3.40.50.80">
    <property type="entry name" value="Nucleotide-binding domain of ferredoxin-NADP reductase (FNR) module"/>
    <property type="match status" value="1"/>
</dbReference>
<dbReference type="Gene3D" id="2.40.30.10">
    <property type="entry name" value="Translation factors"/>
    <property type="match status" value="1"/>
</dbReference>
<dbReference type="HAMAP" id="MF_00430">
    <property type="entry name" value="NqrF"/>
    <property type="match status" value="1"/>
</dbReference>
<dbReference type="InterPro" id="IPR036010">
    <property type="entry name" value="2Fe-2S_ferredoxin-like_sf"/>
</dbReference>
<dbReference type="InterPro" id="IPR001041">
    <property type="entry name" value="2Fe-2S_ferredoxin-type"/>
</dbReference>
<dbReference type="InterPro" id="IPR012675">
    <property type="entry name" value="Beta-grasp_dom_sf"/>
</dbReference>
<dbReference type="InterPro" id="IPR008333">
    <property type="entry name" value="Cbr1-like_FAD-bd_dom"/>
</dbReference>
<dbReference type="InterPro" id="IPR017927">
    <property type="entry name" value="FAD-bd_FR_type"/>
</dbReference>
<dbReference type="InterPro" id="IPR039261">
    <property type="entry name" value="FNR_nucleotide-bd"/>
</dbReference>
<dbReference type="InterPro" id="IPR010205">
    <property type="entry name" value="NqrF"/>
</dbReference>
<dbReference type="InterPro" id="IPR001433">
    <property type="entry name" value="OxRdtase_FAD/NAD-bd"/>
</dbReference>
<dbReference type="InterPro" id="IPR017938">
    <property type="entry name" value="Riboflavin_synthase-like_b-brl"/>
</dbReference>
<dbReference type="NCBIfam" id="TIGR01941">
    <property type="entry name" value="nqrF"/>
    <property type="match status" value="1"/>
</dbReference>
<dbReference type="PANTHER" id="PTHR43644">
    <property type="entry name" value="NA(+)-TRANSLOCATING NADH-QUINONE REDUCTASE SUBUNIT"/>
    <property type="match status" value="1"/>
</dbReference>
<dbReference type="PANTHER" id="PTHR43644:SF1">
    <property type="entry name" value="NAD(P)H-FLAVIN REDUCTASE"/>
    <property type="match status" value="1"/>
</dbReference>
<dbReference type="Pfam" id="PF00970">
    <property type="entry name" value="FAD_binding_6"/>
    <property type="match status" value="1"/>
</dbReference>
<dbReference type="Pfam" id="PF00111">
    <property type="entry name" value="Fer2"/>
    <property type="match status" value="1"/>
</dbReference>
<dbReference type="Pfam" id="PF00175">
    <property type="entry name" value="NAD_binding_1"/>
    <property type="match status" value="1"/>
</dbReference>
<dbReference type="PIRSF" id="PIRSF000044">
    <property type="entry name" value="Cis_Diol_DH_RD"/>
    <property type="match status" value="1"/>
</dbReference>
<dbReference type="SUPFAM" id="SSF54292">
    <property type="entry name" value="2Fe-2S ferredoxin-like"/>
    <property type="match status" value="1"/>
</dbReference>
<dbReference type="SUPFAM" id="SSF52343">
    <property type="entry name" value="Ferredoxin reductase-like, C-terminal NADP-linked domain"/>
    <property type="match status" value="1"/>
</dbReference>
<dbReference type="SUPFAM" id="SSF63380">
    <property type="entry name" value="Riboflavin synthase domain-like"/>
    <property type="match status" value="1"/>
</dbReference>
<dbReference type="PROSITE" id="PS51085">
    <property type="entry name" value="2FE2S_FER_2"/>
    <property type="match status" value="1"/>
</dbReference>
<dbReference type="PROSITE" id="PS51384">
    <property type="entry name" value="FAD_FR"/>
    <property type="match status" value="1"/>
</dbReference>
<evidence type="ECO:0000255" key="1">
    <source>
        <dbReference type="HAMAP-Rule" id="MF_00430"/>
    </source>
</evidence>
<comment type="function">
    <text evidence="1">NQR complex catalyzes the reduction of ubiquinone-1 to ubiquinol by two successive reactions, coupled with the transport of Na(+) ions from the cytoplasm to the periplasm. The first step is catalyzed by NqrF, which accepts electrons from NADH and reduces ubiquinone-1 to ubisemiquinone by a one-electron transfer pathway.</text>
</comment>
<comment type="catalytic activity">
    <reaction evidence="1">
        <text>a ubiquinone + n Na(+)(in) + NADH + H(+) = a ubiquinol + n Na(+)(out) + NAD(+)</text>
        <dbReference type="Rhea" id="RHEA:47748"/>
        <dbReference type="Rhea" id="RHEA-COMP:9565"/>
        <dbReference type="Rhea" id="RHEA-COMP:9566"/>
        <dbReference type="ChEBI" id="CHEBI:15378"/>
        <dbReference type="ChEBI" id="CHEBI:16389"/>
        <dbReference type="ChEBI" id="CHEBI:17976"/>
        <dbReference type="ChEBI" id="CHEBI:29101"/>
        <dbReference type="ChEBI" id="CHEBI:57540"/>
        <dbReference type="ChEBI" id="CHEBI:57945"/>
        <dbReference type="EC" id="7.2.1.1"/>
    </reaction>
</comment>
<comment type="cofactor">
    <cofactor evidence="1">
        <name>[2Fe-2S] cluster</name>
        <dbReference type="ChEBI" id="CHEBI:190135"/>
    </cofactor>
    <text evidence="1">Binds 1 [2Fe-2S] cluster.</text>
</comment>
<comment type="cofactor">
    <cofactor evidence="1">
        <name>FAD</name>
        <dbReference type="ChEBI" id="CHEBI:57692"/>
    </cofactor>
</comment>
<comment type="subunit">
    <text evidence="1">Composed of six subunits; NqrA, NqrB, NqrC, NqrD, NqrE and NqrF.</text>
</comment>
<comment type="subcellular location">
    <subcellularLocation>
        <location evidence="1">Cell inner membrane</location>
        <topology evidence="1">Single-pass membrane protein</topology>
    </subcellularLocation>
</comment>
<comment type="similarity">
    <text evidence="1">Belongs to the NqrF family.</text>
</comment>
<name>NQRF_VIBVU</name>
<protein>
    <recommendedName>
        <fullName evidence="1">Na(+)-translocating NADH-quinone reductase subunit F</fullName>
        <shortName evidence="1">Na(+)-NQR subunit F</shortName>
        <shortName evidence="1">Na(+)-translocating NQR subunit F</shortName>
        <ecNumber evidence="1">7.2.1.1</ecNumber>
    </recommendedName>
    <alternativeName>
        <fullName evidence="1">NQR complex subunit F</fullName>
    </alternativeName>
    <alternativeName>
        <fullName evidence="1">NQR-1 subunit F</fullName>
    </alternativeName>
</protein>
<sequence length="407" mass="44945">MDIILGVVMFTLIVLALVLVILFAKSKLVPTGDITISINGDADKSIVTSPGGKLLSALAGAGVFVSSACGGGGSCGQCRVKVKSGGGDILPTELDHITKGEAREGERLACQVAVKTDMDIELPEEIFGVKKWECTVISNDNKATFIKELKLQIPDGESVPFRAGGYIQIEAPAHHVKYADFDVPEEYRGDWDKFNLFRYESIVKEDIIRAYSMANYPEEFGIIMLNVRIATPPPNNPDVAPGQMSSYIWSLKEGDKCTISGPFGEFFAKDTDAEMVFIGGGAGMAPMRSHIFDQLKRLKSKRKMSYWYGARSKREMFYVEDFDGLAAENDNFVWHCALSDPLPEDNWDGYTGFIHNVLYENYLRDHDAPEDCEYYMCGPPMMNAAVIGMLKNLGVEDENILLDDFGG</sequence>
<accession>Q8DBJ1</accession>
<feature type="chain" id="PRO_0000074510" description="Na(+)-translocating NADH-quinone reductase subunit F">
    <location>
        <begin position="1"/>
        <end position="407"/>
    </location>
</feature>
<feature type="transmembrane region" description="Helical" evidence="1">
    <location>
        <begin position="3"/>
        <end position="23"/>
    </location>
</feature>
<feature type="domain" description="2Fe-2S ferredoxin-type" evidence="1">
    <location>
        <begin position="32"/>
        <end position="126"/>
    </location>
</feature>
<feature type="domain" description="FAD-binding FR-type" evidence="1">
    <location>
        <begin position="129"/>
        <end position="269"/>
    </location>
</feature>
<feature type="region of interest" description="Catalytic">
    <location>
        <begin position="272"/>
        <end position="389"/>
    </location>
</feature>
<feature type="binding site" evidence="1">
    <location>
        <position position="69"/>
    </location>
    <ligand>
        <name>[2Fe-2S] cluster</name>
        <dbReference type="ChEBI" id="CHEBI:190135"/>
    </ligand>
</feature>
<feature type="binding site" evidence="1">
    <location>
        <position position="75"/>
    </location>
    <ligand>
        <name>[2Fe-2S] cluster</name>
        <dbReference type="ChEBI" id="CHEBI:190135"/>
    </ligand>
</feature>
<feature type="binding site" evidence="1">
    <location>
        <position position="78"/>
    </location>
    <ligand>
        <name>[2Fe-2S] cluster</name>
        <dbReference type="ChEBI" id="CHEBI:190135"/>
    </ligand>
</feature>
<feature type="binding site" evidence="1">
    <location>
        <position position="110"/>
    </location>
    <ligand>
        <name>[2Fe-2S] cluster</name>
        <dbReference type="ChEBI" id="CHEBI:190135"/>
    </ligand>
</feature>
<keyword id="KW-0001">2Fe-2S</keyword>
<keyword id="KW-0997">Cell inner membrane</keyword>
<keyword id="KW-1003">Cell membrane</keyword>
<keyword id="KW-0274">FAD</keyword>
<keyword id="KW-0285">Flavoprotein</keyword>
<keyword id="KW-0406">Ion transport</keyword>
<keyword id="KW-0408">Iron</keyword>
<keyword id="KW-0411">Iron-sulfur</keyword>
<keyword id="KW-0472">Membrane</keyword>
<keyword id="KW-0479">Metal-binding</keyword>
<keyword id="KW-0520">NAD</keyword>
<keyword id="KW-0915">Sodium</keyword>
<keyword id="KW-0739">Sodium transport</keyword>
<keyword id="KW-1278">Translocase</keyword>
<keyword id="KW-0812">Transmembrane</keyword>
<keyword id="KW-1133">Transmembrane helix</keyword>
<keyword id="KW-0813">Transport</keyword>
<keyword id="KW-0830">Ubiquinone</keyword>
<proteinExistence type="inferred from homology"/>
<reference key="1">
    <citation type="submission" date="2002-12" db="EMBL/GenBank/DDBJ databases">
        <title>Complete genome sequence of Vibrio vulnificus CMCP6.</title>
        <authorList>
            <person name="Rhee J.H."/>
            <person name="Kim S.Y."/>
            <person name="Chung S.S."/>
            <person name="Kim J.J."/>
            <person name="Moon Y.H."/>
            <person name="Jeong H."/>
            <person name="Choy H.E."/>
        </authorList>
    </citation>
    <scope>NUCLEOTIDE SEQUENCE [LARGE SCALE GENOMIC DNA]</scope>
    <source>
        <strain>CMCP6</strain>
    </source>
</reference>
<organism>
    <name type="scientific">Vibrio vulnificus (strain CMCP6)</name>
    <dbReference type="NCBI Taxonomy" id="216895"/>
    <lineage>
        <taxon>Bacteria</taxon>
        <taxon>Pseudomonadati</taxon>
        <taxon>Pseudomonadota</taxon>
        <taxon>Gammaproteobacteria</taxon>
        <taxon>Vibrionales</taxon>
        <taxon>Vibrionaceae</taxon>
        <taxon>Vibrio</taxon>
    </lineage>
</organism>
<gene>
    <name evidence="1" type="primary">nqrF</name>
    <name type="ordered locus">VV1_1826</name>
</gene>